<feature type="chain" id="PRO_0000381816" description="Centrosomal protein kizuna">
    <location>
        <begin position="1"/>
        <end position="736"/>
    </location>
</feature>
<feature type="region of interest" description="Disordered" evidence="3">
    <location>
        <begin position="192"/>
        <end position="238"/>
    </location>
</feature>
<feature type="region of interest" description="Disordered" evidence="3">
    <location>
        <begin position="279"/>
        <end position="305"/>
    </location>
</feature>
<feature type="region of interest" description="Disordered" evidence="3">
    <location>
        <begin position="323"/>
        <end position="348"/>
    </location>
</feature>
<feature type="region of interest" description="Disordered" evidence="3">
    <location>
        <begin position="642"/>
        <end position="690"/>
    </location>
</feature>
<feature type="coiled-coil region" evidence="2">
    <location>
        <begin position="10"/>
        <end position="35"/>
    </location>
</feature>
<feature type="compositionally biased region" description="Polar residues" evidence="3">
    <location>
        <begin position="192"/>
        <end position="208"/>
    </location>
</feature>
<feature type="compositionally biased region" description="Basic and acidic residues" evidence="3">
    <location>
        <begin position="210"/>
        <end position="219"/>
    </location>
</feature>
<feature type="compositionally biased region" description="Polar residues" evidence="3">
    <location>
        <begin position="328"/>
        <end position="339"/>
    </location>
</feature>
<feature type="compositionally biased region" description="Low complexity" evidence="3">
    <location>
        <begin position="658"/>
        <end position="668"/>
    </location>
</feature>
<feature type="compositionally biased region" description="Polar residues" evidence="3">
    <location>
        <begin position="678"/>
        <end position="690"/>
    </location>
</feature>
<keyword id="KW-0966">Cell projection</keyword>
<keyword id="KW-0175">Coiled coil</keyword>
<keyword id="KW-0963">Cytoplasm</keyword>
<keyword id="KW-0206">Cytoskeleton</keyword>
<keyword id="KW-1185">Reference proteome</keyword>
<gene>
    <name type="primary">kiz</name>
    <name type="synonym">plk1s1</name>
</gene>
<accession>A1L2H3</accession>
<organism>
    <name type="scientific">Xenopus laevis</name>
    <name type="common">African clawed frog</name>
    <dbReference type="NCBI Taxonomy" id="8355"/>
    <lineage>
        <taxon>Eukaryota</taxon>
        <taxon>Metazoa</taxon>
        <taxon>Chordata</taxon>
        <taxon>Craniata</taxon>
        <taxon>Vertebrata</taxon>
        <taxon>Euteleostomi</taxon>
        <taxon>Amphibia</taxon>
        <taxon>Batrachia</taxon>
        <taxon>Anura</taxon>
        <taxon>Pipoidea</taxon>
        <taxon>Pipidae</taxon>
        <taxon>Xenopodinae</taxon>
        <taxon>Xenopus</taxon>
        <taxon>Xenopus</taxon>
    </lineage>
</organism>
<name>KIZ_XENLA</name>
<proteinExistence type="evidence at transcript level"/>
<reference key="1">
    <citation type="submission" date="2006-12" db="EMBL/GenBank/DDBJ databases">
        <authorList>
            <consortium name="NIH - Xenopus Gene Collection (XGC) project"/>
        </authorList>
    </citation>
    <scope>NUCLEOTIDE SEQUENCE [LARGE SCALE MRNA]</scope>
    <source>
        <tissue>Spleen</tissue>
    </source>
</reference>
<sequence length="736" mass="82673">MAEGNSDYDHRAMKLQRNLRHCEGKRLELERELFQHSSSDAHICHLKYMKLKNSLKEVCERGKKAHLRNQAFLQEFDLIEARLFGLISNANALQKKKMQLKSHPPEMNKGPNMSRSTYHPATIFMGRQMSASSSIEHCLTQRKSPQPTKSFSISDPHSVRQAAMNRNVTDSCVVPANSDIQCLNKPDKIDGNTSFQLSQKMPVTSVASSEDGRTHRAQIDKSQSGRKHLVESKQSAQLSTQILERLSPENRARDLQNDSPGNMVEKSLMYERLVPNEESFTHANPSGASPDACDYINNQTSDKHSARENLSETIESHLIPEEEDKQCLDSSSDLTVSISESEDDSYPPCEVNRIEVNQNDEKNLYTALPKQETVILKNYEQSSVIQPLQTSEVNSCDESSSASTISQSNLSDEGFFHLLQSIERMVLLREQGGMELYQRAGINQKQLLRLISVCNRMGALRVEDLEACCALVLCKTQELLKSTFVGYSHEATAGIHNTDESKERFLSRKCQERLLGHIAFLNKHHILNEKVLPECFTSVMMLSDGQNSCKSVENVENSTEDGNVPQVSSTMKDDPLTIKPRQIVQELYKTTGSSHQEFETQVHPGVVLQSANISVESNTQAEEENDEDEISDLSEIYIPGLTVEEGNATTKASKKQISETSFSSSEKSPISRKEDKNIQPNYMKSNNMSTGNKFSKVVTTVKSKAFWGESEDSSSEIEAMLRPKTESVDDFDDFFD</sequence>
<dbReference type="EMBL" id="BC129527">
    <property type="protein sequence ID" value="AAI29528.1"/>
    <property type="status" value="ALT_INIT"/>
    <property type="molecule type" value="mRNA"/>
</dbReference>
<dbReference type="SMR" id="A1L2H3"/>
<dbReference type="AGR" id="Xenbase:XB-GENE-5892338"/>
<dbReference type="Xenbase" id="XB-GENE-5892338">
    <property type="gene designation" value="kiz.S"/>
</dbReference>
<dbReference type="Proteomes" id="UP000186698">
    <property type="component" value="Unplaced"/>
</dbReference>
<dbReference type="GO" id="GO:0042995">
    <property type="term" value="C:cell projection"/>
    <property type="evidence" value="ECO:0007669"/>
    <property type="project" value="UniProtKB-KW"/>
</dbReference>
<dbReference type="GO" id="GO:0005813">
    <property type="term" value="C:centrosome"/>
    <property type="evidence" value="ECO:0000250"/>
    <property type="project" value="UniProtKB"/>
</dbReference>
<dbReference type="GO" id="GO:0005737">
    <property type="term" value="C:cytoplasm"/>
    <property type="evidence" value="ECO:0007669"/>
    <property type="project" value="UniProtKB-KW"/>
</dbReference>
<dbReference type="GO" id="GO:0007051">
    <property type="term" value="P:spindle organization"/>
    <property type="evidence" value="ECO:0000250"/>
    <property type="project" value="UniProtKB"/>
</dbReference>
<dbReference type="InterPro" id="IPR026742">
    <property type="entry name" value="Centrosomal_kizuma"/>
</dbReference>
<dbReference type="PANTHER" id="PTHR16299">
    <property type="entry name" value="CENTROSOMAL PROTEIN KIZUNA"/>
    <property type="match status" value="1"/>
</dbReference>
<dbReference type="PANTHER" id="PTHR16299:SF2">
    <property type="entry name" value="CENTROSOMAL PROTEIN KIZUNA"/>
    <property type="match status" value="1"/>
</dbReference>
<comment type="function">
    <text evidence="1">Centrosomal protein required for establishing a robust mitotic centrosome architecture that can endure the forces that converge on the centrosomes during spindle formation. Required for stabilizing the expanded pericentriolar material around the centriole.</text>
</comment>
<comment type="subcellular location">
    <subcellularLocation>
        <location evidence="1">Cytoplasm</location>
        <location evidence="1">Cytoskeleton</location>
        <location evidence="1">Microtubule organizing center</location>
        <location evidence="1">Centrosome</location>
    </subcellularLocation>
    <subcellularLocation>
        <location evidence="1">Cytoplasm</location>
        <location evidence="1">Cytoskeleton</location>
        <location evidence="1">Cilium basal body</location>
    </subcellularLocation>
</comment>
<comment type="similarity">
    <text evidence="4">Belongs to the kizuna family.</text>
</comment>
<comment type="sequence caution" evidence="4">
    <conflict type="erroneous initiation">
        <sequence resource="EMBL-CDS" id="AAI29528"/>
    </conflict>
</comment>
<protein>
    <recommendedName>
        <fullName>Centrosomal protein kizuna</fullName>
    </recommendedName>
    <alternativeName>
        <fullName>Polo-like kinase 1 substrate 1</fullName>
    </alternativeName>
</protein>
<evidence type="ECO:0000250" key="1">
    <source>
        <dbReference type="UniProtKB" id="Q2M2Z5"/>
    </source>
</evidence>
<evidence type="ECO:0000255" key="2"/>
<evidence type="ECO:0000256" key="3">
    <source>
        <dbReference type="SAM" id="MobiDB-lite"/>
    </source>
</evidence>
<evidence type="ECO:0000305" key="4"/>